<evidence type="ECO:0000255" key="1">
    <source>
        <dbReference type="HAMAP-Rule" id="MF_01254"/>
    </source>
</evidence>
<reference key="1">
    <citation type="journal article" date="2011" name="J. Bacteriol.">
        <title>Comparative genomics of 28 Salmonella enterica isolates: evidence for CRISPR-mediated adaptive sublineage evolution.</title>
        <authorList>
            <person name="Fricke W.F."/>
            <person name="Mammel M.K."/>
            <person name="McDermott P.F."/>
            <person name="Tartera C."/>
            <person name="White D.G."/>
            <person name="Leclerc J.E."/>
            <person name="Ravel J."/>
            <person name="Cebula T.A."/>
        </authorList>
    </citation>
    <scope>NUCLEOTIDE SEQUENCE [LARGE SCALE GENOMIC DNA]</scope>
    <source>
        <strain>CVM19633</strain>
    </source>
</reference>
<accession>B4TUJ7</accession>
<comment type="function">
    <text evidence="1">Converts the aldose L-fucose into the corresponding ketose L-fuculose.</text>
</comment>
<comment type="catalytic activity">
    <reaction evidence="1">
        <text>L-fucose = L-fuculose</text>
        <dbReference type="Rhea" id="RHEA:17233"/>
        <dbReference type="ChEBI" id="CHEBI:2181"/>
        <dbReference type="ChEBI" id="CHEBI:17617"/>
        <dbReference type="EC" id="5.3.1.25"/>
    </reaction>
</comment>
<comment type="cofactor">
    <cofactor evidence="1">
        <name>Mn(2+)</name>
        <dbReference type="ChEBI" id="CHEBI:29035"/>
    </cofactor>
</comment>
<comment type="pathway">
    <text evidence="1">Carbohydrate degradation; L-fucose degradation; L-lactaldehyde and glycerone phosphate from L-fucose: step 1/3.</text>
</comment>
<comment type="subunit">
    <text evidence="1">Homohexamer.</text>
</comment>
<comment type="subcellular location">
    <subcellularLocation>
        <location evidence="1">Cytoplasm</location>
    </subcellularLocation>
</comment>
<comment type="similarity">
    <text evidence="1">Belongs to the L-fucose isomerase family.</text>
</comment>
<dbReference type="EC" id="5.3.1.25" evidence="1"/>
<dbReference type="EMBL" id="CP001127">
    <property type="protein sequence ID" value="ACF90205.1"/>
    <property type="molecule type" value="Genomic_DNA"/>
</dbReference>
<dbReference type="RefSeq" id="WP_000724123.1">
    <property type="nucleotide sequence ID" value="NC_011094.1"/>
</dbReference>
<dbReference type="SMR" id="B4TUJ7"/>
<dbReference type="KEGG" id="sew:SeSA_A3138"/>
<dbReference type="HOGENOM" id="CLU_033326_1_0_6"/>
<dbReference type="UniPathway" id="UPA00563">
    <property type="reaction ID" value="UER00624"/>
</dbReference>
<dbReference type="Proteomes" id="UP000001865">
    <property type="component" value="Chromosome"/>
</dbReference>
<dbReference type="GO" id="GO:0005737">
    <property type="term" value="C:cytoplasm"/>
    <property type="evidence" value="ECO:0007669"/>
    <property type="project" value="UniProtKB-SubCell"/>
</dbReference>
<dbReference type="GO" id="GO:0008790">
    <property type="term" value="F:arabinose isomerase activity"/>
    <property type="evidence" value="ECO:0007669"/>
    <property type="project" value="TreeGrafter"/>
</dbReference>
<dbReference type="GO" id="GO:0008736">
    <property type="term" value="F:L-fucose isomerase activity"/>
    <property type="evidence" value="ECO:0007669"/>
    <property type="project" value="UniProtKB-UniRule"/>
</dbReference>
<dbReference type="GO" id="GO:0030145">
    <property type="term" value="F:manganese ion binding"/>
    <property type="evidence" value="ECO:0007669"/>
    <property type="project" value="UniProtKB-UniRule"/>
</dbReference>
<dbReference type="GO" id="GO:0019571">
    <property type="term" value="P:D-arabinose catabolic process"/>
    <property type="evidence" value="ECO:0007669"/>
    <property type="project" value="TreeGrafter"/>
</dbReference>
<dbReference type="GO" id="GO:0042355">
    <property type="term" value="P:L-fucose catabolic process"/>
    <property type="evidence" value="ECO:0007669"/>
    <property type="project" value="UniProtKB-UniRule"/>
</dbReference>
<dbReference type="FunFam" id="3.20.14.10:FF:000001">
    <property type="entry name" value="L-fucose isomerase"/>
    <property type="match status" value="1"/>
</dbReference>
<dbReference type="FunFam" id="3.40.275.10:FF:000001">
    <property type="entry name" value="L-fucose isomerase"/>
    <property type="match status" value="1"/>
</dbReference>
<dbReference type="FunFam" id="3.40.50.1070:FF:000001">
    <property type="entry name" value="L-fucose isomerase"/>
    <property type="match status" value="1"/>
</dbReference>
<dbReference type="Gene3D" id="3.40.50.1070">
    <property type="match status" value="1"/>
</dbReference>
<dbReference type="Gene3D" id="3.40.275.10">
    <property type="entry name" value="L-fucose Isomerase, Chain A, domain 2"/>
    <property type="match status" value="1"/>
</dbReference>
<dbReference type="Gene3D" id="3.20.14.10">
    <property type="entry name" value="L-fucose/L-arabinose isomerase, C-terminal"/>
    <property type="match status" value="1"/>
</dbReference>
<dbReference type="HAMAP" id="MF_01254">
    <property type="entry name" value="Fucose_iso"/>
    <property type="match status" value="1"/>
</dbReference>
<dbReference type="InterPro" id="IPR004216">
    <property type="entry name" value="Fuc/Ara_isomerase_C"/>
</dbReference>
<dbReference type="InterPro" id="IPR038393">
    <property type="entry name" value="Fuc_iso_dom3_sf"/>
</dbReference>
<dbReference type="InterPro" id="IPR015888">
    <property type="entry name" value="Fuc_isomerase_C"/>
</dbReference>
<dbReference type="InterPro" id="IPR038391">
    <property type="entry name" value="Fucose_iso_dom1_sf"/>
</dbReference>
<dbReference type="InterPro" id="IPR012888">
    <property type="entry name" value="Fucose_iso_N1"/>
</dbReference>
<dbReference type="InterPro" id="IPR005763">
    <property type="entry name" value="Fucose_isomerase"/>
</dbReference>
<dbReference type="InterPro" id="IPR038392">
    <property type="entry name" value="Fucose_isomerase_dom2_sf"/>
</dbReference>
<dbReference type="InterPro" id="IPR009015">
    <property type="entry name" value="Fucose_isomerase_N/cen_sf"/>
</dbReference>
<dbReference type="InterPro" id="IPR012889">
    <property type="entry name" value="Fucose_isomerase_N2"/>
</dbReference>
<dbReference type="NCBIfam" id="TIGR01089">
    <property type="entry name" value="fucI"/>
    <property type="match status" value="1"/>
</dbReference>
<dbReference type="NCBIfam" id="NF008220">
    <property type="entry name" value="PRK10991.1"/>
    <property type="match status" value="1"/>
</dbReference>
<dbReference type="PANTHER" id="PTHR37840">
    <property type="entry name" value="L-FUCOSE ISOMERASE"/>
    <property type="match status" value="1"/>
</dbReference>
<dbReference type="PANTHER" id="PTHR37840:SF1">
    <property type="entry name" value="L-FUCOSE ISOMERASE"/>
    <property type="match status" value="1"/>
</dbReference>
<dbReference type="Pfam" id="PF02952">
    <property type="entry name" value="Fucose_iso_C"/>
    <property type="match status" value="1"/>
</dbReference>
<dbReference type="Pfam" id="PF07881">
    <property type="entry name" value="Fucose_iso_N1"/>
    <property type="match status" value="1"/>
</dbReference>
<dbReference type="Pfam" id="PF07882">
    <property type="entry name" value="Fucose_iso_N2"/>
    <property type="match status" value="1"/>
</dbReference>
<dbReference type="SUPFAM" id="SSF50443">
    <property type="entry name" value="FucI/AraA C-terminal domain-like"/>
    <property type="match status" value="1"/>
</dbReference>
<dbReference type="SUPFAM" id="SSF53743">
    <property type="entry name" value="FucI/AraA N-terminal and middle domains"/>
    <property type="match status" value="1"/>
</dbReference>
<sequence length="591" mass="64785">MKKISLPKIGIRPVIDGRRMGVRESLEEQTMNMAKATAALITEKIRHACGAQVECVIADTCIAGMAESAACEEKFSSQNVGVTITVTPCWCYGSETIDMDPMRPKAIWGFNGTERPGAVYLAAALAAHSQKGIPAFSIYGHDVQDADDTSIPADVEEKLLRFARAGLAVASMKGKSYLSVGGVSMGIAGSIVDHNFFESWLGMKVQAVDMTELRRRIDQKIYDEAELEMALAWADKNFRYGEDQNASQYKRNEAQNRAVLKESLLMAMCIRDMMQGNKTLADKGLVEESLGYNAIAAGFQGQRHWTDQYPNGDTAEALLNSSFDWNGIREPFVVATENDSLNGVAMLFGHQLTGTAQIFADVRTYWSPEAVERVTGQALSGLAEHGIIHLINSGSAALDGACKQRDSEGKPTMKPHWEISQQEADACLAATEWCPAIHEYFRGGGYSSRFLTEGGVPFTMTRVNIIKGLGPVLQIAEGWSVELPKAMHDQLDARTNSTWPTTWFAPRLTGKGPFTDVYSVMANWGANHGVLTIGHVGADFITLAAMLRIPVCMHNVEEAKIYRPSAWAAHGMDIEGQDYRACQNYGPLYKR</sequence>
<keyword id="KW-0119">Carbohydrate metabolism</keyword>
<keyword id="KW-0963">Cytoplasm</keyword>
<keyword id="KW-0294">Fucose metabolism</keyword>
<keyword id="KW-0413">Isomerase</keyword>
<keyword id="KW-0464">Manganese</keyword>
<keyword id="KW-0479">Metal-binding</keyword>
<proteinExistence type="inferred from homology"/>
<gene>
    <name evidence="1" type="primary">fucI</name>
    <name type="ordered locus">SeSA_A3138</name>
</gene>
<protein>
    <recommendedName>
        <fullName evidence="1">L-fucose isomerase</fullName>
        <ecNumber evidence="1">5.3.1.25</ecNumber>
    </recommendedName>
    <alternativeName>
        <fullName evidence="1">6-deoxy-L-galactose isomerase</fullName>
    </alternativeName>
    <alternativeName>
        <fullName>FucIase</fullName>
    </alternativeName>
</protein>
<name>FUCI_SALSV</name>
<organism>
    <name type="scientific">Salmonella schwarzengrund (strain CVM19633)</name>
    <dbReference type="NCBI Taxonomy" id="439843"/>
    <lineage>
        <taxon>Bacteria</taxon>
        <taxon>Pseudomonadati</taxon>
        <taxon>Pseudomonadota</taxon>
        <taxon>Gammaproteobacteria</taxon>
        <taxon>Enterobacterales</taxon>
        <taxon>Enterobacteriaceae</taxon>
        <taxon>Salmonella</taxon>
    </lineage>
</organism>
<feature type="chain" id="PRO_1000139964" description="L-fucose isomerase">
    <location>
        <begin position="1"/>
        <end position="591"/>
    </location>
</feature>
<feature type="active site" description="Proton acceptor" evidence="1">
    <location>
        <position position="337"/>
    </location>
</feature>
<feature type="active site" description="Proton acceptor" evidence="1">
    <location>
        <position position="361"/>
    </location>
</feature>
<feature type="binding site" evidence="1">
    <location>
        <position position="337"/>
    </location>
    <ligand>
        <name>Mn(2+)</name>
        <dbReference type="ChEBI" id="CHEBI:29035"/>
    </ligand>
</feature>
<feature type="binding site" evidence="1">
    <location>
        <position position="361"/>
    </location>
    <ligand>
        <name>Mn(2+)</name>
        <dbReference type="ChEBI" id="CHEBI:29035"/>
    </ligand>
</feature>
<feature type="binding site" evidence="1">
    <location>
        <position position="528"/>
    </location>
    <ligand>
        <name>Mn(2+)</name>
        <dbReference type="ChEBI" id="CHEBI:29035"/>
    </ligand>
</feature>